<proteinExistence type="evidence at protein level"/>
<evidence type="ECO:0000255" key="1"/>
<evidence type="ECO:0000255" key="2">
    <source>
        <dbReference type="PROSITE-ProRule" id="PRU00498"/>
    </source>
</evidence>
<evidence type="ECO:0000256" key="3">
    <source>
        <dbReference type="SAM" id="MobiDB-lite"/>
    </source>
</evidence>
<evidence type="ECO:0000269" key="4">
    <source>
    </source>
</evidence>
<evidence type="ECO:0000303" key="5">
    <source>
    </source>
</evidence>
<evidence type="ECO:0000305" key="6"/>
<evidence type="ECO:0000305" key="7">
    <source>
    </source>
</evidence>
<evidence type="ECO:0000312" key="8">
    <source>
        <dbReference type="EMBL" id="BAD15800.1"/>
    </source>
</evidence>
<evidence type="ECO:0000312" key="9">
    <source>
        <dbReference type="EMBL" id="BAF08632.1"/>
    </source>
</evidence>
<evidence type="ECO:0000312" key="10">
    <source>
        <dbReference type="EMBL" id="EAZ22841.1"/>
    </source>
</evidence>
<reference key="1">
    <citation type="journal article" date="2005" name="Nature">
        <title>The map-based sequence of the rice genome.</title>
        <authorList>
            <consortium name="International rice genome sequencing project (IRGSP)"/>
        </authorList>
    </citation>
    <scope>NUCLEOTIDE SEQUENCE [LARGE SCALE GENOMIC DNA]</scope>
    <source>
        <strain>cv. Nipponbare</strain>
    </source>
</reference>
<reference key="2">
    <citation type="journal article" date="2008" name="Nucleic Acids Res.">
        <title>The rice annotation project database (RAP-DB): 2008 update.</title>
        <authorList>
            <consortium name="The rice annotation project (RAP)"/>
        </authorList>
    </citation>
    <scope>GENOME REANNOTATION</scope>
    <source>
        <strain>cv. Nipponbare</strain>
    </source>
</reference>
<reference key="3">
    <citation type="journal article" date="2013" name="Rice">
        <title>Improvement of the Oryza sativa Nipponbare reference genome using next generation sequence and optical map data.</title>
        <authorList>
            <person name="Kawahara Y."/>
            <person name="de la Bastide M."/>
            <person name="Hamilton J.P."/>
            <person name="Kanamori H."/>
            <person name="McCombie W.R."/>
            <person name="Ouyang S."/>
            <person name="Schwartz D.C."/>
            <person name="Tanaka T."/>
            <person name="Wu J."/>
            <person name="Zhou S."/>
            <person name="Childs K.L."/>
            <person name="Davidson R.M."/>
            <person name="Lin H."/>
            <person name="Quesada-Ocampo L."/>
            <person name="Vaillancourt B."/>
            <person name="Sakai H."/>
            <person name="Lee S.S."/>
            <person name="Kim J."/>
            <person name="Numa H."/>
            <person name="Itoh T."/>
            <person name="Buell C.R."/>
            <person name="Matsumoto T."/>
        </authorList>
    </citation>
    <scope>GENOME REANNOTATION</scope>
    <source>
        <strain>cv. Nipponbare</strain>
    </source>
</reference>
<reference key="4">
    <citation type="journal article" date="2005" name="PLoS Biol.">
        <title>The genomes of Oryza sativa: a history of duplications.</title>
        <authorList>
            <person name="Yu J."/>
            <person name="Wang J."/>
            <person name="Lin W."/>
            <person name="Li S."/>
            <person name="Li H."/>
            <person name="Zhou J."/>
            <person name="Ni P."/>
            <person name="Dong W."/>
            <person name="Hu S."/>
            <person name="Zeng C."/>
            <person name="Zhang J."/>
            <person name="Zhang Y."/>
            <person name="Li R."/>
            <person name="Xu Z."/>
            <person name="Li S."/>
            <person name="Li X."/>
            <person name="Zheng H."/>
            <person name="Cong L."/>
            <person name="Lin L."/>
            <person name="Yin J."/>
            <person name="Geng J."/>
            <person name="Li G."/>
            <person name="Shi J."/>
            <person name="Liu J."/>
            <person name="Lv H."/>
            <person name="Li J."/>
            <person name="Wang J."/>
            <person name="Deng Y."/>
            <person name="Ran L."/>
            <person name="Shi X."/>
            <person name="Wang X."/>
            <person name="Wu Q."/>
            <person name="Li C."/>
            <person name="Ren X."/>
            <person name="Wang J."/>
            <person name="Wang X."/>
            <person name="Li D."/>
            <person name="Liu D."/>
            <person name="Zhang X."/>
            <person name="Ji Z."/>
            <person name="Zhao W."/>
            <person name="Sun Y."/>
            <person name="Zhang Z."/>
            <person name="Bao J."/>
            <person name="Han Y."/>
            <person name="Dong L."/>
            <person name="Ji J."/>
            <person name="Chen P."/>
            <person name="Wu S."/>
            <person name="Liu J."/>
            <person name="Xiao Y."/>
            <person name="Bu D."/>
            <person name="Tan J."/>
            <person name="Yang L."/>
            <person name="Ye C."/>
            <person name="Zhang J."/>
            <person name="Xu J."/>
            <person name="Zhou Y."/>
            <person name="Yu Y."/>
            <person name="Zhang B."/>
            <person name="Zhuang S."/>
            <person name="Wei H."/>
            <person name="Liu B."/>
            <person name="Lei M."/>
            <person name="Yu H."/>
            <person name="Li Y."/>
            <person name="Xu H."/>
            <person name="Wei S."/>
            <person name="He X."/>
            <person name="Fang L."/>
            <person name="Zhang Z."/>
            <person name="Zhang Y."/>
            <person name="Huang X."/>
            <person name="Su Z."/>
            <person name="Tong W."/>
            <person name="Li J."/>
            <person name="Tong Z."/>
            <person name="Li S."/>
            <person name="Ye J."/>
            <person name="Wang L."/>
            <person name="Fang L."/>
            <person name="Lei T."/>
            <person name="Chen C.-S."/>
            <person name="Chen H.-C."/>
            <person name="Xu Z."/>
            <person name="Li H."/>
            <person name="Huang H."/>
            <person name="Zhang F."/>
            <person name="Xu H."/>
            <person name="Li N."/>
            <person name="Zhao C."/>
            <person name="Li S."/>
            <person name="Dong L."/>
            <person name="Huang Y."/>
            <person name="Li L."/>
            <person name="Xi Y."/>
            <person name="Qi Q."/>
            <person name="Li W."/>
            <person name="Zhang B."/>
            <person name="Hu W."/>
            <person name="Zhang Y."/>
            <person name="Tian X."/>
            <person name="Jiao Y."/>
            <person name="Liang X."/>
            <person name="Jin J."/>
            <person name="Gao L."/>
            <person name="Zheng W."/>
            <person name="Hao B."/>
            <person name="Liu S.-M."/>
            <person name="Wang W."/>
            <person name="Yuan L."/>
            <person name="Cao M."/>
            <person name="McDermott J."/>
            <person name="Samudrala R."/>
            <person name="Wang J."/>
            <person name="Wong G.K.-S."/>
            <person name="Yang H."/>
        </authorList>
    </citation>
    <scope>NUCLEOTIDE SEQUENCE [LARGE SCALE GENOMIC DNA]</scope>
    <source>
        <strain>cv. Nipponbare</strain>
    </source>
</reference>
<reference key="5">
    <citation type="journal article" date="2012" name="Proc. Natl. Acad. Sci. U.S.A.">
        <title>XAX1 from glycosyltransferase family 61 mediates xylosyltransfer to rice xylan.</title>
        <authorList>
            <person name="Chiniquy D."/>
            <person name="Sharma V."/>
            <person name="Schultink A."/>
            <person name="Baidoo E.E."/>
            <person name="Rautengarten C."/>
            <person name="Cheng K."/>
            <person name="Carroll A."/>
            <person name="Ulvskov P."/>
            <person name="Harholt J."/>
            <person name="Keasling J.D."/>
            <person name="Pauly M."/>
            <person name="Scheller H.V."/>
            <person name="Ronald P.C."/>
        </authorList>
    </citation>
    <scope>FUNCTION</scope>
    <scope>CATALYTIC ACTIVITY</scope>
    <scope>SUBCELLULAR LOCATION</scope>
    <scope>TISSUE SPECIFICITY</scope>
    <scope>DISRUPTION PHENOTYPE</scope>
</reference>
<accession>Q6Z7I3</accession>
<organism>
    <name type="scientific">Oryza sativa subsp. japonica</name>
    <name type="common">Rice</name>
    <dbReference type="NCBI Taxonomy" id="39947"/>
    <lineage>
        <taxon>Eukaryota</taxon>
        <taxon>Viridiplantae</taxon>
        <taxon>Streptophyta</taxon>
        <taxon>Embryophyta</taxon>
        <taxon>Tracheophyta</taxon>
        <taxon>Spermatophyta</taxon>
        <taxon>Magnoliopsida</taxon>
        <taxon>Liliopsida</taxon>
        <taxon>Poales</taxon>
        <taxon>Poaceae</taxon>
        <taxon>BOP clade</taxon>
        <taxon>Oryzoideae</taxon>
        <taxon>Oryzeae</taxon>
        <taxon>Oryzinae</taxon>
        <taxon>Oryza</taxon>
        <taxon>Oryza sativa</taxon>
    </lineage>
</organism>
<feature type="chain" id="PRO_0000445784" description="Beta-1,2-xylosyltransferease XAX1">
    <location>
        <begin position="1"/>
        <end position="566"/>
    </location>
</feature>
<feature type="topological domain" description="Cytoplasmic" evidence="6">
    <location>
        <begin position="1"/>
        <end position="43"/>
    </location>
</feature>
<feature type="transmembrane region" description="Helical; Signal-anchor for type II membrane protein" evidence="1">
    <location>
        <begin position="44"/>
        <end position="64"/>
    </location>
</feature>
<feature type="topological domain" description="Lumenal" evidence="6">
    <location>
        <begin position="65"/>
        <end position="566"/>
    </location>
</feature>
<feature type="region of interest" description="Disordered" evidence="3">
    <location>
        <begin position="1"/>
        <end position="25"/>
    </location>
</feature>
<feature type="region of interest" description="Disordered" evidence="3">
    <location>
        <begin position="78"/>
        <end position="180"/>
    </location>
</feature>
<feature type="compositionally biased region" description="Pro residues" evidence="3">
    <location>
        <begin position="84"/>
        <end position="94"/>
    </location>
</feature>
<feature type="glycosylation site" description="N-linked (GlcNAc...) asparagine" evidence="2">
    <location>
        <position position="74"/>
    </location>
</feature>
<feature type="glycosylation site" description="N-linked (GlcNAc...) asparagine" evidence="2">
    <location>
        <position position="104"/>
    </location>
</feature>
<feature type="glycosylation site" description="N-linked (GlcNAc...) asparagine" evidence="2">
    <location>
        <position position="368"/>
    </location>
</feature>
<feature type="glycosylation site" description="N-linked (GlcNAc...) asparagine" evidence="2">
    <location>
        <position position="429"/>
    </location>
</feature>
<feature type="glycosylation site" description="N-linked (GlcNAc...) asparagine" evidence="2">
    <location>
        <position position="515"/>
    </location>
</feature>
<feature type="glycosylation site" description="N-linked (GlcNAc...) asparagine" evidence="2">
    <location>
        <position position="549"/>
    </location>
</feature>
<comment type="function">
    <text evidence="4">Glycosyltransferase involved in the xylosylation of xylan, the major hemicellulose (non-cellulosic component) of primary and secondary walls of angiosperms (PubMed:23027943). Possesses beta-1,2-xylosyltransferase activity, transferring xylose from UDP-xylose to the xylan backbone (PubMed:23027943).</text>
</comment>
<comment type="pathway">
    <text evidence="6">Glycan metabolism.</text>
</comment>
<comment type="subcellular location">
    <subcellularLocation>
        <location evidence="4">Golgi apparatus membrane</location>
        <topology evidence="7">Single-pass type II membrane protein</topology>
    </subcellularLocation>
</comment>
<comment type="tissue specificity">
    <text evidence="4">Highly expressed in young panicles.</text>
</comment>
<comment type="disruption phenotype">
    <text evidence="4">Dwarf phenotype, decreased levels of xylose, ferulic acid and coumaric acid in leaves, and increased saccharification efficiency.</text>
</comment>
<comment type="similarity">
    <text evidence="6">Belongs to the glycosyltransferase 61 family.</text>
</comment>
<keyword id="KW-0961">Cell wall biogenesis/degradation</keyword>
<keyword id="KW-0325">Glycoprotein</keyword>
<keyword id="KW-0328">Glycosyltransferase</keyword>
<keyword id="KW-0333">Golgi apparatus</keyword>
<keyword id="KW-0472">Membrane</keyword>
<keyword id="KW-1185">Reference proteome</keyword>
<keyword id="KW-0735">Signal-anchor</keyword>
<keyword id="KW-0808">Transferase</keyword>
<keyword id="KW-0812">Transmembrane</keyword>
<keyword id="KW-1133">Transmembrane helix</keyword>
<gene>
    <name evidence="5" type="primary">XAX1</name>
    <name evidence="9" type="ordered locus">Os02g0329800</name>
    <name evidence="6" type="ordered locus">LOC_Os02g22380</name>
    <name evidence="8" type="ORF">OJ1521_G01.21</name>
    <name evidence="10" type="ORF">OsJ_06519</name>
</gene>
<sequence length="566" mass="61948">MTSTAYSRPSKLPGGGNGSDRRLPPRLMRGLTTKIEPKKLGVGLLAGCCLALLTYVSLAKLFAIYSPVFASTANTSALMQNSPPSSPETGPIPPQETAAGAGNNDSTVDPVDLPEDKSLVEAQPQEPGFPSAESQEPGLPAALSRKEDDAERAAAAAASEIKQSEKKNGVAAGGDTKIKCDENGVDEGFPYARPSVCELYGDVRVSPKQKTIYVVNPSGAGGFDENGEKRLRPYARKDDFLLPGVVEVTIKSVPSEAAAPKCTKQHAVPAVVFSVAGYTDNFFHDMTDAMIPLFLTTAHLKGEVQILITNYKPWWVQKYTPLLRKLSNYDVINFDEDAGVHCFPQGYLGLYRDRDLIISPHPTRNPRNYTMVDYNRFLRDALELRRDRPSVLGEEPGMRPRMLIISRAGTRKLLNLEEVAAAATELGFNVTVAEAGADVPAFAALVNSADVLLAVHGAGLTNQIFLPAEAVVVQIVPWGNMDWMATNFYGQPARDMQLRYVEYYVGEEETSLKHNYSRDHMVFKDPKALHAQGWQTLAATIMKQDVEVNLTRFRPILLQALDRLQQ</sequence>
<dbReference type="EC" id="2.4.2.-" evidence="4"/>
<dbReference type="EMBL" id="AP004854">
    <property type="protein sequence ID" value="BAD15800.1"/>
    <property type="molecule type" value="Genomic_DNA"/>
</dbReference>
<dbReference type="EMBL" id="AP008208">
    <property type="protein sequence ID" value="BAF08632.1"/>
    <property type="molecule type" value="Genomic_DNA"/>
</dbReference>
<dbReference type="EMBL" id="AP014958">
    <property type="protein sequence ID" value="BAS78432.1"/>
    <property type="molecule type" value="Genomic_DNA"/>
</dbReference>
<dbReference type="EMBL" id="CM000139">
    <property type="protein sequence ID" value="EAZ22841.1"/>
    <property type="molecule type" value="Genomic_DNA"/>
</dbReference>
<dbReference type="FunCoup" id="Q6Z7I3">
    <property type="interactions" value="124"/>
</dbReference>
<dbReference type="STRING" id="39947.Q6Z7I3"/>
<dbReference type="CAZy" id="GT61">
    <property type="family name" value="Glycosyltransferase Family 61"/>
</dbReference>
<dbReference type="GlyCosmos" id="Q6Z7I3">
    <property type="glycosylation" value="6 sites, No reported glycans"/>
</dbReference>
<dbReference type="PaxDb" id="39947-Q6Z7I3"/>
<dbReference type="EnsemblPlants" id="Os02t0329800-01">
    <property type="protein sequence ID" value="Os02t0329800-01"/>
    <property type="gene ID" value="Os02g0329800"/>
</dbReference>
<dbReference type="GeneID" id="4329203"/>
<dbReference type="Gramene" id="Os02t0329800-01">
    <property type="protein sequence ID" value="Os02t0329800-01"/>
    <property type="gene ID" value="Os02g0329800"/>
</dbReference>
<dbReference type="KEGG" id="dosa:Os02g0329800"/>
<dbReference type="KEGG" id="osa:4329203"/>
<dbReference type="eggNOG" id="KOG4698">
    <property type="taxonomic scope" value="Eukaryota"/>
</dbReference>
<dbReference type="HOGENOM" id="CLU_016869_3_2_1"/>
<dbReference type="InParanoid" id="Q6Z7I3"/>
<dbReference type="OMA" id="QTIMKQD"/>
<dbReference type="OrthoDB" id="529273at2759"/>
<dbReference type="PlantReactome" id="R-OSA-5654909">
    <property type="pathway name" value="Xylan biosynthesis"/>
</dbReference>
<dbReference type="Proteomes" id="UP000000763">
    <property type="component" value="Chromosome 2"/>
</dbReference>
<dbReference type="Proteomes" id="UP000007752">
    <property type="component" value="Chromosome 2"/>
</dbReference>
<dbReference type="Proteomes" id="UP000059680">
    <property type="component" value="Chromosome 2"/>
</dbReference>
<dbReference type="GO" id="GO:0000139">
    <property type="term" value="C:Golgi membrane"/>
    <property type="evidence" value="ECO:0000314"/>
    <property type="project" value="UniProtKB"/>
</dbReference>
<dbReference type="GO" id="GO:0035252">
    <property type="term" value="F:UDP-xylosyltransferase activity"/>
    <property type="evidence" value="ECO:0000314"/>
    <property type="project" value="UniProtKB"/>
</dbReference>
<dbReference type="GO" id="GO:0009664">
    <property type="term" value="P:plant-type cell wall organization"/>
    <property type="evidence" value="ECO:0000315"/>
    <property type="project" value="UniProtKB"/>
</dbReference>
<dbReference type="InterPro" id="IPR049625">
    <property type="entry name" value="Glyco_transf_61_cat"/>
</dbReference>
<dbReference type="InterPro" id="IPR007657">
    <property type="entry name" value="Glycosyltransferase_61"/>
</dbReference>
<dbReference type="PANTHER" id="PTHR20961:SF27">
    <property type="entry name" value="BETA-1,2-XYLOSYLTRANSFEREASE XAX1"/>
    <property type="match status" value="1"/>
</dbReference>
<dbReference type="PANTHER" id="PTHR20961">
    <property type="entry name" value="GLYCOSYLTRANSFERASE"/>
    <property type="match status" value="1"/>
</dbReference>
<dbReference type="Pfam" id="PF04577">
    <property type="entry name" value="Glyco_transf_61"/>
    <property type="match status" value="1"/>
</dbReference>
<protein>
    <recommendedName>
        <fullName evidence="6">Beta-1,2-xylosyltransferease XAX1</fullName>
        <ecNumber evidence="4">2.4.2.-</ecNumber>
    </recommendedName>
    <alternativeName>
        <fullName evidence="5">Protein XYLOSYL ARABINOSYL SUBSTITUTION OF XYLAN 1</fullName>
    </alternativeName>
</protein>
<name>XAX1_ORYSJ</name>